<proteinExistence type="inferred from homology"/>
<evidence type="ECO:0000255" key="1">
    <source>
        <dbReference type="HAMAP-Rule" id="MF_00651"/>
    </source>
</evidence>
<evidence type="ECO:0000256" key="2">
    <source>
        <dbReference type="SAM" id="MobiDB-lite"/>
    </source>
</evidence>
<dbReference type="EC" id="3.1.-.-" evidence="1"/>
<dbReference type="EMBL" id="CP000325">
    <property type="protein sequence ID" value="ABL04236.1"/>
    <property type="molecule type" value="Genomic_DNA"/>
</dbReference>
<dbReference type="SMR" id="A0PPG7"/>
<dbReference type="KEGG" id="mul:MUL_1755"/>
<dbReference type="eggNOG" id="COG0816">
    <property type="taxonomic scope" value="Bacteria"/>
</dbReference>
<dbReference type="HOGENOM" id="CLU_098240_0_1_11"/>
<dbReference type="Proteomes" id="UP000000765">
    <property type="component" value="Chromosome"/>
</dbReference>
<dbReference type="GO" id="GO:0005829">
    <property type="term" value="C:cytosol"/>
    <property type="evidence" value="ECO:0007669"/>
    <property type="project" value="TreeGrafter"/>
</dbReference>
<dbReference type="GO" id="GO:0004518">
    <property type="term" value="F:nuclease activity"/>
    <property type="evidence" value="ECO:0007669"/>
    <property type="project" value="UniProtKB-KW"/>
</dbReference>
<dbReference type="GO" id="GO:0000967">
    <property type="term" value="P:rRNA 5'-end processing"/>
    <property type="evidence" value="ECO:0007669"/>
    <property type="project" value="UniProtKB-UniRule"/>
</dbReference>
<dbReference type="CDD" id="cd16964">
    <property type="entry name" value="YqgF"/>
    <property type="match status" value="1"/>
</dbReference>
<dbReference type="FunFam" id="3.30.420.140:FF:000005">
    <property type="entry name" value="Putative pre-16S rRNA nuclease"/>
    <property type="match status" value="1"/>
</dbReference>
<dbReference type="Gene3D" id="3.30.420.140">
    <property type="entry name" value="YqgF/RNase H-like domain"/>
    <property type="match status" value="1"/>
</dbReference>
<dbReference type="HAMAP" id="MF_00651">
    <property type="entry name" value="Nuclease_YqgF"/>
    <property type="match status" value="1"/>
</dbReference>
<dbReference type="InterPro" id="IPR012337">
    <property type="entry name" value="RNaseH-like_sf"/>
</dbReference>
<dbReference type="InterPro" id="IPR005227">
    <property type="entry name" value="YqgF"/>
</dbReference>
<dbReference type="InterPro" id="IPR006641">
    <property type="entry name" value="YqgF/RNaseH-like_dom"/>
</dbReference>
<dbReference type="InterPro" id="IPR037027">
    <property type="entry name" value="YqgF/RNaseH-like_dom_sf"/>
</dbReference>
<dbReference type="NCBIfam" id="TIGR00250">
    <property type="entry name" value="RNAse_H_YqgF"/>
    <property type="match status" value="1"/>
</dbReference>
<dbReference type="PANTHER" id="PTHR33317">
    <property type="entry name" value="POLYNUCLEOTIDYL TRANSFERASE, RIBONUCLEASE H-LIKE SUPERFAMILY PROTEIN"/>
    <property type="match status" value="1"/>
</dbReference>
<dbReference type="PANTHER" id="PTHR33317:SF4">
    <property type="entry name" value="POLYNUCLEOTIDYL TRANSFERASE, RIBONUCLEASE H-LIKE SUPERFAMILY PROTEIN"/>
    <property type="match status" value="1"/>
</dbReference>
<dbReference type="Pfam" id="PF03652">
    <property type="entry name" value="RuvX"/>
    <property type="match status" value="1"/>
</dbReference>
<dbReference type="SMART" id="SM00732">
    <property type="entry name" value="YqgFc"/>
    <property type="match status" value="1"/>
</dbReference>
<dbReference type="SUPFAM" id="SSF53098">
    <property type="entry name" value="Ribonuclease H-like"/>
    <property type="match status" value="1"/>
</dbReference>
<name>YQGF_MYCUA</name>
<keyword id="KW-0963">Cytoplasm</keyword>
<keyword id="KW-0378">Hydrolase</keyword>
<keyword id="KW-0540">Nuclease</keyword>
<keyword id="KW-0690">Ribosome biogenesis</keyword>
<sequence>MVAASHRSPDRPGDPEGLEPGTGRGRRLGIDVGTVRIGVASSDPDGILATPLETVRRERSGKHLRRLATLVGETEAVEVIVGLPRTLADRIGSSAQDAIDLADELAARVAPIPVRLADERLTTVSAQRSLREAGVRAKNQRAVIDQAAAVAILQAWLDQRRTLAGGRADG</sequence>
<feature type="chain" id="PRO_1000061541" description="Putative pre-16S rRNA nuclease">
    <location>
        <begin position="1"/>
        <end position="170"/>
    </location>
</feature>
<feature type="region of interest" description="Disordered" evidence="2">
    <location>
        <begin position="1"/>
        <end position="29"/>
    </location>
</feature>
<organism>
    <name type="scientific">Mycobacterium ulcerans (strain Agy99)</name>
    <dbReference type="NCBI Taxonomy" id="362242"/>
    <lineage>
        <taxon>Bacteria</taxon>
        <taxon>Bacillati</taxon>
        <taxon>Actinomycetota</taxon>
        <taxon>Actinomycetes</taxon>
        <taxon>Mycobacteriales</taxon>
        <taxon>Mycobacteriaceae</taxon>
        <taxon>Mycobacterium</taxon>
        <taxon>Mycobacterium ulcerans group</taxon>
    </lineage>
</organism>
<protein>
    <recommendedName>
        <fullName evidence="1">Putative pre-16S rRNA nuclease</fullName>
        <ecNumber evidence="1">3.1.-.-</ecNumber>
    </recommendedName>
</protein>
<comment type="function">
    <text evidence="1">Could be a nuclease involved in processing of the 5'-end of pre-16S rRNA.</text>
</comment>
<comment type="subcellular location">
    <subcellularLocation>
        <location evidence="1">Cytoplasm</location>
    </subcellularLocation>
</comment>
<comment type="similarity">
    <text evidence="1">Belongs to the YqgF nuclease family.</text>
</comment>
<accession>A0PPG7</accession>
<reference key="1">
    <citation type="journal article" date="2007" name="Genome Res.">
        <title>Reductive evolution and niche adaptation inferred from the genome of Mycobacterium ulcerans, the causative agent of Buruli ulcer.</title>
        <authorList>
            <person name="Stinear T.P."/>
            <person name="Seemann T."/>
            <person name="Pidot S."/>
            <person name="Frigui W."/>
            <person name="Reysset G."/>
            <person name="Garnier T."/>
            <person name="Meurice G."/>
            <person name="Simon D."/>
            <person name="Bouchier C."/>
            <person name="Ma L."/>
            <person name="Tichit M."/>
            <person name="Porter J.L."/>
            <person name="Ryan J."/>
            <person name="Johnson P.D.R."/>
            <person name="Davies J.K."/>
            <person name="Jenkin G.A."/>
            <person name="Small P.L.C."/>
            <person name="Jones L.M."/>
            <person name="Tekaia F."/>
            <person name="Laval F."/>
            <person name="Daffe M."/>
            <person name="Parkhill J."/>
            <person name="Cole S.T."/>
        </authorList>
    </citation>
    <scope>NUCLEOTIDE SEQUENCE [LARGE SCALE GENOMIC DNA]</scope>
    <source>
        <strain>Agy99</strain>
    </source>
</reference>
<gene>
    <name type="ordered locus">MUL_1755</name>
</gene>